<accession>Q9CQG2</accession>
<accession>Q3UMA9</accession>
<accession>Q9D062</accession>
<proteinExistence type="evidence at protein level"/>
<comment type="function">
    <text evidence="1 3 4">RNA N6-methyltransferase that methylates adenosine residues at the N(6) position of a subset of RNAs and is involved in S-adenosyl-L-methionine homeostasis by regulating expression of MAT2A transcripts (PubMed:29262316, PubMed:30197299). Able to N6-methylate a subset of mRNAs and U6 small nuclear RNAs (U6 snRNAs) (By similarity). In contrast to the METTL3-METTL14 heterodimer, only able to methylate a limited number of RNAs: requires both a 5'UACAGAGAA-3' nonamer sequence and a specific RNA structure (By similarity). Plays a key role in S-adenosyl-L-methionine homeostasis by mediating N6-methylation of MAT2A mRNAs, altering splicing of MAT2A transcripts: in presence of S-adenosyl-L-methionine, binds the 3'-UTR region of MAT2A mRNA and specifically N6-methylates the first hairpin of MAT2A mRNA, preventing recognition of their 3'-splice site by U2AF1/U2AF35, thereby inhibiting splicing and protein production of S-adenosylmethionine synthase (By similarity). In S-adenosyl-L-methionine-limiting conditions, binds the 3'-UTR region of MAT2A mRNA but stalls due to the lack of a methyl donor, preventing N6-methylation and promoting expression of MAT2A (PubMed:29262316). In addition to mRNAs, also able to mediate N6-methylation of U6 small nuclear RNA (U6 snRNA): specifically N6-methylates adenine in position 43 of U6 snRNAs (By similarity). Also able to bind various lncRNAs, such as 7SK snRNA (7SK RNA) or 7SL RNA (By similarity). Specifically binds the 3'-end of the MALAT1 long non-coding RNA (By similarity) (PubMed:29262316, PubMed:30197299).</text>
</comment>
<comment type="catalytic activity">
    <reaction evidence="1">
        <text>adenosine in U6 snRNA + S-adenosyl-L-methionine = N(6)-methyladenosine in U6 snRNA + S-adenosyl-L-homocysteine + H(+)</text>
        <dbReference type="Rhea" id="RHEA:52808"/>
        <dbReference type="Rhea" id="RHEA-COMP:13573"/>
        <dbReference type="Rhea" id="RHEA-COMP:13574"/>
        <dbReference type="ChEBI" id="CHEBI:15378"/>
        <dbReference type="ChEBI" id="CHEBI:57856"/>
        <dbReference type="ChEBI" id="CHEBI:59789"/>
        <dbReference type="ChEBI" id="CHEBI:74411"/>
        <dbReference type="ChEBI" id="CHEBI:74449"/>
        <dbReference type="EC" id="2.1.1.346"/>
    </reaction>
</comment>
<comment type="catalytic activity">
    <reaction evidence="7">
        <text>an adenosine in mRNA + S-adenosyl-L-methionine = an N(6)-methyladenosine in mRNA + S-adenosyl-L-homocysteine + H(+)</text>
        <dbReference type="Rhea" id="RHEA:55584"/>
        <dbReference type="Rhea" id="RHEA-COMP:12414"/>
        <dbReference type="Rhea" id="RHEA-COMP:12417"/>
        <dbReference type="ChEBI" id="CHEBI:15378"/>
        <dbReference type="ChEBI" id="CHEBI:57856"/>
        <dbReference type="ChEBI" id="CHEBI:59789"/>
        <dbReference type="ChEBI" id="CHEBI:74411"/>
        <dbReference type="ChEBI" id="CHEBI:74449"/>
        <dbReference type="EC" id="2.1.1.348"/>
    </reaction>
</comment>
<comment type="activity regulation">
    <text evidence="1">Methyltransferase activity is autoinhibited by the K-loop region that blocks S-adenosyl-L-methionine-binding. Upon activation, K-loop changes conformation, allowing S-adenosyl-L-methionine-binding and subsequent methyltransferase activity. mRNA N6-adenosine-methyltransferase activity is inhibited by zinc.</text>
</comment>
<comment type="subunit">
    <text evidence="1">Interacts with MEPCE. Interacts with LARP7.</text>
</comment>
<comment type="subcellular location">
    <subcellularLocation>
        <location evidence="1">Nucleus</location>
    </subcellularLocation>
    <subcellularLocation>
        <location evidence="1">Cytoplasm</location>
    </subcellularLocation>
</comment>
<comment type="alternative products">
    <event type="alternative splicing"/>
    <isoform>
        <id>Q9CQG2-1</id>
        <name>1</name>
        <sequence type="displayed"/>
    </isoform>
    <isoform>
        <id>Q9CQG2-2</id>
        <name>2</name>
        <sequence type="described" ref="VSP_029342"/>
    </isoform>
</comment>
<comment type="domain">
    <text evidence="1">The VCR (vertebrate conserved) regions bind the first hairpin of MAT2A mRNAs. The VCR regions interact with the internal stem-loop within U6 snRNAs, inducing the conformational rearrangement of the A43-containing region of U6 snRNA, thereby modifying the RNA structure to become suitable for productive catalysis by the methyltransferase region.</text>
</comment>
<comment type="domain">
    <text evidence="1">The K-loop region occludes the S-adenosyl-L-methionine-binding pocket. Upon activation, conformation of the K-loop changes, allowing S-adenosyl-L-methionine-binding.</text>
</comment>
<comment type="disruption phenotype">
    <text evidence="4">Embryonic lethality: embryos develop until blastocyst stage but development is stopped around the time of implantation (PubMed:30197299). Defects are caused by dysregulation of MAT2A mRNAs (PubMed:30197299).</text>
</comment>
<comment type="similarity">
    <text evidence="6">Belongs to the methyltransferase superfamily. METTL16/RlmF family.</text>
</comment>
<comment type="caution">
    <text evidence="1 3">According to a report, N6-methylation of MAT2A affects MAT2A mRNA stability instead of preventing splicing (PubMed:29262316). However, it was later shown that N6-methylation of MAT2A transcripts prevents recognition of their 3'-splice site by U2AF1/U2AF35, thereby inhibiting splicing and protein production (By similarity).</text>
</comment>
<evidence type="ECO:0000250" key="1">
    <source>
        <dbReference type="UniProtKB" id="Q86W50"/>
    </source>
</evidence>
<evidence type="ECO:0000256" key="2">
    <source>
        <dbReference type="SAM" id="MobiDB-lite"/>
    </source>
</evidence>
<evidence type="ECO:0000269" key="3">
    <source>
    </source>
</evidence>
<evidence type="ECO:0000269" key="4">
    <source>
    </source>
</evidence>
<evidence type="ECO:0000303" key="5">
    <source>
    </source>
</evidence>
<evidence type="ECO:0000305" key="6"/>
<evidence type="ECO:0000305" key="7">
    <source>
    </source>
</evidence>
<evidence type="ECO:0000312" key="8">
    <source>
        <dbReference type="MGI" id="MGI:1914743"/>
    </source>
</evidence>
<evidence type="ECO:0007744" key="9">
    <source>
    </source>
</evidence>
<organism>
    <name type="scientific">Mus musculus</name>
    <name type="common">Mouse</name>
    <dbReference type="NCBI Taxonomy" id="10090"/>
    <lineage>
        <taxon>Eukaryota</taxon>
        <taxon>Metazoa</taxon>
        <taxon>Chordata</taxon>
        <taxon>Craniata</taxon>
        <taxon>Vertebrata</taxon>
        <taxon>Euteleostomi</taxon>
        <taxon>Mammalia</taxon>
        <taxon>Eutheria</taxon>
        <taxon>Euarchontoglires</taxon>
        <taxon>Glires</taxon>
        <taxon>Rodentia</taxon>
        <taxon>Myomorpha</taxon>
        <taxon>Muroidea</taxon>
        <taxon>Muridae</taxon>
        <taxon>Murinae</taxon>
        <taxon>Mus</taxon>
        <taxon>Mus</taxon>
    </lineage>
</organism>
<feature type="chain" id="PRO_0000310768" description="RNA N(6)-adenosine-methyltransferase METTL16">
    <location>
        <begin position="1"/>
        <end position="553"/>
    </location>
</feature>
<feature type="region of interest" description="RNA-binding" evidence="1">
    <location>
        <begin position="17"/>
        <end position="20"/>
    </location>
</feature>
<feature type="region of interest" description="K-loop" evidence="1">
    <location>
        <begin position="163"/>
        <end position="167"/>
    </location>
</feature>
<feature type="region of interest" description="RNA-binding" evidence="1">
    <location>
        <begin position="199"/>
        <end position="211"/>
    </location>
</feature>
<feature type="region of interest" description="RNA-binding" evidence="1">
    <location>
        <begin position="250"/>
        <end position="254"/>
    </location>
</feature>
<feature type="region of interest" description="RNA-binding" evidence="1">
    <location>
        <begin position="277"/>
        <end position="283"/>
    </location>
</feature>
<feature type="region of interest" description="VCR 1" evidence="1">
    <location>
        <begin position="289"/>
        <end position="400"/>
    </location>
</feature>
<feature type="region of interest" description="Disordered" evidence="2">
    <location>
        <begin position="457"/>
        <end position="496"/>
    </location>
</feature>
<feature type="region of interest" description="VCR 2" evidence="1">
    <location>
        <begin position="506"/>
        <end position="553"/>
    </location>
</feature>
<feature type="compositionally biased region" description="Acidic residues" evidence="2">
    <location>
        <begin position="458"/>
        <end position="468"/>
    </location>
</feature>
<feature type="binding site" evidence="1">
    <location>
        <position position="82"/>
    </location>
    <ligand>
        <name>S-adenosyl-L-methionine</name>
        <dbReference type="ChEBI" id="CHEBI:59789"/>
    </ligand>
</feature>
<feature type="binding site" evidence="1">
    <location>
        <position position="110"/>
    </location>
    <ligand>
        <name>S-adenosyl-L-methionine</name>
        <dbReference type="ChEBI" id="CHEBI:59789"/>
    </ligand>
</feature>
<feature type="binding site" evidence="1">
    <location>
        <position position="114"/>
    </location>
    <ligand>
        <name>S-adenosyl-L-methionine</name>
        <dbReference type="ChEBI" id="CHEBI:59789"/>
    </ligand>
</feature>
<feature type="binding site" evidence="1">
    <location>
        <position position="133"/>
    </location>
    <ligand>
        <name>S-adenosyl-L-methionine</name>
        <dbReference type="ChEBI" id="CHEBI:59789"/>
    </ligand>
</feature>
<feature type="binding site" evidence="1">
    <location>
        <position position="164"/>
    </location>
    <ligand>
        <name>S-adenosyl-L-methionine</name>
        <dbReference type="ChEBI" id="CHEBI:59789"/>
    </ligand>
</feature>
<feature type="binding site" evidence="1">
    <location>
        <position position="184"/>
    </location>
    <ligand>
        <name>S-adenosyl-L-methionine</name>
        <dbReference type="ChEBI" id="CHEBI:59789"/>
    </ligand>
</feature>
<feature type="modified residue" description="Phosphoserine" evidence="1">
    <location>
        <position position="329"/>
    </location>
</feature>
<feature type="modified residue" description="Phosphoserine" evidence="9">
    <location>
        <position position="425"/>
    </location>
</feature>
<feature type="modified residue" description="Phosphoserine" evidence="9">
    <location>
        <position position="429"/>
    </location>
</feature>
<feature type="modified residue" description="Phosphothreonine" evidence="9">
    <location>
        <position position="463"/>
    </location>
</feature>
<feature type="splice variant" id="VSP_029342" description="In isoform 2." evidence="5">
    <location>
        <begin position="267"/>
        <end position="296"/>
    </location>
</feature>
<feature type="sequence conflict" description="In Ref. 1; BAE26189." evidence="6" ref="1">
    <original>R</original>
    <variation>H</variation>
    <location>
        <position position="498"/>
    </location>
</feature>
<feature type="sequence conflict" description="In Ref. 1; BAB27835." evidence="6" ref="1">
    <original>R</original>
    <variation>G</variation>
    <location>
        <position position="533"/>
    </location>
</feature>
<gene>
    <name evidence="8" type="primary">Mettl16</name>
    <name evidence="8" type="synonym">Mett10d</name>
</gene>
<reference key="1">
    <citation type="journal article" date="2005" name="Science">
        <title>The transcriptional landscape of the mammalian genome.</title>
        <authorList>
            <person name="Carninci P."/>
            <person name="Kasukawa T."/>
            <person name="Katayama S."/>
            <person name="Gough J."/>
            <person name="Frith M.C."/>
            <person name="Maeda N."/>
            <person name="Oyama R."/>
            <person name="Ravasi T."/>
            <person name="Lenhard B."/>
            <person name="Wells C."/>
            <person name="Kodzius R."/>
            <person name="Shimokawa K."/>
            <person name="Bajic V.B."/>
            <person name="Brenner S.E."/>
            <person name="Batalov S."/>
            <person name="Forrest A.R."/>
            <person name="Zavolan M."/>
            <person name="Davis M.J."/>
            <person name="Wilming L.G."/>
            <person name="Aidinis V."/>
            <person name="Allen J.E."/>
            <person name="Ambesi-Impiombato A."/>
            <person name="Apweiler R."/>
            <person name="Aturaliya R.N."/>
            <person name="Bailey T.L."/>
            <person name="Bansal M."/>
            <person name="Baxter L."/>
            <person name="Beisel K.W."/>
            <person name="Bersano T."/>
            <person name="Bono H."/>
            <person name="Chalk A.M."/>
            <person name="Chiu K.P."/>
            <person name="Choudhary V."/>
            <person name="Christoffels A."/>
            <person name="Clutterbuck D.R."/>
            <person name="Crowe M.L."/>
            <person name="Dalla E."/>
            <person name="Dalrymple B.P."/>
            <person name="de Bono B."/>
            <person name="Della Gatta G."/>
            <person name="di Bernardo D."/>
            <person name="Down T."/>
            <person name="Engstrom P."/>
            <person name="Fagiolini M."/>
            <person name="Faulkner G."/>
            <person name="Fletcher C.F."/>
            <person name="Fukushima T."/>
            <person name="Furuno M."/>
            <person name="Futaki S."/>
            <person name="Gariboldi M."/>
            <person name="Georgii-Hemming P."/>
            <person name="Gingeras T.R."/>
            <person name="Gojobori T."/>
            <person name="Green R.E."/>
            <person name="Gustincich S."/>
            <person name="Harbers M."/>
            <person name="Hayashi Y."/>
            <person name="Hensch T.K."/>
            <person name="Hirokawa N."/>
            <person name="Hill D."/>
            <person name="Huminiecki L."/>
            <person name="Iacono M."/>
            <person name="Ikeo K."/>
            <person name="Iwama A."/>
            <person name="Ishikawa T."/>
            <person name="Jakt M."/>
            <person name="Kanapin A."/>
            <person name="Katoh M."/>
            <person name="Kawasawa Y."/>
            <person name="Kelso J."/>
            <person name="Kitamura H."/>
            <person name="Kitano H."/>
            <person name="Kollias G."/>
            <person name="Krishnan S.P."/>
            <person name="Kruger A."/>
            <person name="Kummerfeld S.K."/>
            <person name="Kurochkin I.V."/>
            <person name="Lareau L.F."/>
            <person name="Lazarevic D."/>
            <person name="Lipovich L."/>
            <person name="Liu J."/>
            <person name="Liuni S."/>
            <person name="McWilliam S."/>
            <person name="Madan Babu M."/>
            <person name="Madera M."/>
            <person name="Marchionni L."/>
            <person name="Matsuda H."/>
            <person name="Matsuzawa S."/>
            <person name="Miki H."/>
            <person name="Mignone F."/>
            <person name="Miyake S."/>
            <person name="Morris K."/>
            <person name="Mottagui-Tabar S."/>
            <person name="Mulder N."/>
            <person name="Nakano N."/>
            <person name="Nakauchi H."/>
            <person name="Ng P."/>
            <person name="Nilsson R."/>
            <person name="Nishiguchi S."/>
            <person name="Nishikawa S."/>
            <person name="Nori F."/>
            <person name="Ohara O."/>
            <person name="Okazaki Y."/>
            <person name="Orlando V."/>
            <person name="Pang K.C."/>
            <person name="Pavan W.J."/>
            <person name="Pavesi G."/>
            <person name="Pesole G."/>
            <person name="Petrovsky N."/>
            <person name="Piazza S."/>
            <person name="Reed J."/>
            <person name="Reid J.F."/>
            <person name="Ring B.Z."/>
            <person name="Ringwald M."/>
            <person name="Rost B."/>
            <person name="Ruan Y."/>
            <person name="Salzberg S.L."/>
            <person name="Sandelin A."/>
            <person name="Schneider C."/>
            <person name="Schoenbach C."/>
            <person name="Sekiguchi K."/>
            <person name="Semple C.A."/>
            <person name="Seno S."/>
            <person name="Sessa L."/>
            <person name="Sheng Y."/>
            <person name="Shibata Y."/>
            <person name="Shimada H."/>
            <person name="Shimada K."/>
            <person name="Silva D."/>
            <person name="Sinclair B."/>
            <person name="Sperling S."/>
            <person name="Stupka E."/>
            <person name="Sugiura K."/>
            <person name="Sultana R."/>
            <person name="Takenaka Y."/>
            <person name="Taki K."/>
            <person name="Tammoja K."/>
            <person name="Tan S.L."/>
            <person name="Tang S."/>
            <person name="Taylor M.S."/>
            <person name="Tegner J."/>
            <person name="Teichmann S.A."/>
            <person name="Ueda H.R."/>
            <person name="van Nimwegen E."/>
            <person name="Verardo R."/>
            <person name="Wei C.L."/>
            <person name="Yagi K."/>
            <person name="Yamanishi H."/>
            <person name="Zabarovsky E."/>
            <person name="Zhu S."/>
            <person name="Zimmer A."/>
            <person name="Hide W."/>
            <person name="Bult C."/>
            <person name="Grimmond S.M."/>
            <person name="Teasdale R.D."/>
            <person name="Liu E.T."/>
            <person name="Brusic V."/>
            <person name="Quackenbush J."/>
            <person name="Wahlestedt C."/>
            <person name="Mattick J.S."/>
            <person name="Hume D.A."/>
            <person name="Kai C."/>
            <person name="Sasaki D."/>
            <person name="Tomaru Y."/>
            <person name="Fukuda S."/>
            <person name="Kanamori-Katayama M."/>
            <person name="Suzuki M."/>
            <person name="Aoki J."/>
            <person name="Arakawa T."/>
            <person name="Iida J."/>
            <person name="Imamura K."/>
            <person name="Itoh M."/>
            <person name="Kato T."/>
            <person name="Kawaji H."/>
            <person name="Kawagashira N."/>
            <person name="Kawashima T."/>
            <person name="Kojima M."/>
            <person name="Kondo S."/>
            <person name="Konno H."/>
            <person name="Nakano K."/>
            <person name="Ninomiya N."/>
            <person name="Nishio T."/>
            <person name="Okada M."/>
            <person name="Plessy C."/>
            <person name="Shibata K."/>
            <person name="Shiraki T."/>
            <person name="Suzuki S."/>
            <person name="Tagami M."/>
            <person name="Waki K."/>
            <person name="Watahiki A."/>
            <person name="Okamura-Oho Y."/>
            <person name="Suzuki H."/>
            <person name="Kawai J."/>
            <person name="Hayashizaki Y."/>
        </authorList>
    </citation>
    <scope>NUCLEOTIDE SEQUENCE [LARGE SCALE MRNA] (ISOFORMS 1 AND 2)</scope>
    <source>
        <strain>C57BL/6J</strain>
        <tissue>Amnion</tissue>
        <tissue>Embryo</tissue>
        <tissue>Mammary gland</tissue>
    </source>
</reference>
<reference key="2">
    <citation type="journal article" date="2009" name="PLoS Biol.">
        <title>Lineage-specific biology revealed by a finished genome assembly of the mouse.</title>
        <authorList>
            <person name="Church D.M."/>
            <person name="Goodstadt L."/>
            <person name="Hillier L.W."/>
            <person name="Zody M.C."/>
            <person name="Goldstein S."/>
            <person name="She X."/>
            <person name="Bult C.J."/>
            <person name="Agarwala R."/>
            <person name="Cherry J.L."/>
            <person name="DiCuccio M."/>
            <person name="Hlavina W."/>
            <person name="Kapustin Y."/>
            <person name="Meric P."/>
            <person name="Maglott D."/>
            <person name="Birtle Z."/>
            <person name="Marques A.C."/>
            <person name="Graves T."/>
            <person name="Zhou S."/>
            <person name="Teague B."/>
            <person name="Potamousis K."/>
            <person name="Churas C."/>
            <person name="Place M."/>
            <person name="Herschleb J."/>
            <person name="Runnheim R."/>
            <person name="Forrest D."/>
            <person name="Amos-Landgraf J."/>
            <person name="Schwartz D.C."/>
            <person name="Cheng Z."/>
            <person name="Lindblad-Toh K."/>
            <person name="Eichler E.E."/>
            <person name="Ponting C.P."/>
        </authorList>
    </citation>
    <scope>NUCLEOTIDE SEQUENCE [LARGE SCALE GENOMIC DNA]</scope>
    <source>
        <strain>C57BL/6J</strain>
    </source>
</reference>
<reference key="3">
    <citation type="journal article" date="2004" name="Genome Res.">
        <title>The status, quality, and expansion of the NIH full-length cDNA project: the Mammalian Gene Collection (MGC).</title>
        <authorList>
            <consortium name="The MGC Project Team"/>
        </authorList>
    </citation>
    <scope>NUCLEOTIDE SEQUENCE [LARGE SCALE MRNA] (ISOFORM 1)</scope>
    <source>
        <strain>C57BL/6J</strain>
        <strain>FVB/N</strain>
        <tissue>Brain</tissue>
        <tissue>Mammary tumor</tissue>
    </source>
</reference>
<reference key="4">
    <citation type="journal article" date="2010" name="Cell">
        <title>A tissue-specific atlas of mouse protein phosphorylation and expression.</title>
        <authorList>
            <person name="Huttlin E.L."/>
            <person name="Jedrychowski M.P."/>
            <person name="Elias J.E."/>
            <person name="Goswami T."/>
            <person name="Rad R."/>
            <person name="Beausoleil S.A."/>
            <person name="Villen J."/>
            <person name="Haas W."/>
            <person name="Sowa M.E."/>
            <person name="Gygi S.P."/>
        </authorList>
    </citation>
    <scope>PHOSPHORYLATION [LARGE SCALE ANALYSIS] AT SER-425; SER-429 AND THR-463</scope>
    <scope>IDENTIFICATION BY MASS SPECTROMETRY [LARGE SCALE ANALYSIS]</scope>
    <source>
        <tissue>Brain</tissue>
        <tissue>Kidney</tissue>
        <tissue>Liver</tissue>
        <tissue>Lung</tissue>
        <tissue>Spleen</tissue>
        <tissue>Testis</tissue>
    </source>
</reference>
<reference key="5">
    <citation type="journal article" date="2017" name="Cell Rep.">
        <title>S-Adenosylmethionine synthesis is regulated by selective N6-adenosine methylation and mRNA degradation involving METTL16 and YTHDC1.</title>
        <authorList>
            <person name="Shima H."/>
            <person name="Matsumoto M."/>
            <person name="Ishigami Y."/>
            <person name="Ebina M."/>
            <person name="Muto A."/>
            <person name="Sato Y."/>
            <person name="Kumagai S."/>
            <person name="Ochiai K."/>
            <person name="Suzuki T."/>
            <person name="Igarashi K."/>
        </authorList>
    </citation>
    <scope>FUNCTION</scope>
    <scope>CATALYTIC ACTIVITY</scope>
</reference>
<reference key="6">
    <citation type="journal article" date="2018" name="Mol. Cell">
        <title>Methylation of structured RNA by the m6A writer METTL16 is essential for mouse embryonic development.</title>
        <authorList>
            <person name="Mendel M."/>
            <person name="Chen K.M."/>
            <person name="Homolka D."/>
            <person name="Gos P."/>
            <person name="Pandey R.R."/>
            <person name="McCarthy A.A."/>
            <person name="Pillai R.S."/>
        </authorList>
    </citation>
    <scope>FUNCTION</scope>
    <scope>DISRUPTION PHENOTYPE</scope>
</reference>
<protein>
    <recommendedName>
        <fullName evidence="6">RNA N(6)-adenosine-methyltransferase METTL16</fullName>
        <ecNumber evidence="7">2.1.1.348</ecNumber>
    </recommendedName>
    <alternativeName>
        <fullName>Methyltransferase 10 domain-containing protein</fullName>
    </alternativeName>
    <alternativeName>
        <fullName>Methyltransferase-like protein 16</fullName>
    </alternativeName>
    <alternativeName>
        <fullName evidence="1">U6 small nuclear RNA (adenine-(43)-N(6))-methyltransferase</fullName>
        <ecNumber evidence="1">2.1.1.346</ecNumber>
    </alternativeName>
</protein>
<dbReference type="EC" id="2.1.1.348" evidence="7"/>
<dbReference type="EC" id="2.1.1.346" evidence="1"/>
<dbReference type="EMBL" id="AK145022">
    <property type="protein sequence ID" value="BAE26189.1"/>
    <property type="molecule type" value="mRNA"/>
</dbReference>
<dbReference type="EMBL" id="AK011780">
    <property type="protein sequence ID" value="BAB27835.1"/>
    <property type="molecule type" value="mRNA"/>
</dbReference>
<dbReference type="EMBL" id="AK012739">
    <property type="protein sequence ID" value="BAB28440.1"/>
    <property type="molecule type" value="mRNA"/>
</dbReference>
<dbReference type="EMBL" id="AK145662">
    <property type="protein sequence ID" value="BAE26574.1"/>
    <property type="molecule type" value="mRNA"/>
</dbReference>
<dbReference type="EMBL" id="AK168798">
    <property type="protein sequence ID" value="BAE40630.1"/>
    <property type="molecule type" value="mRNA"/>
</dbReference>
<dbReference type="EMBL" id="AL604066">
    <property type="status" value="NOT_ANNOTATED_CDS"/>
    <property type="molecule type" value="Genomic_DNA"/>
</dbReference>
<dbReference type="EMBL" id="AL607024">
    <property type="status" value="NOT_ANNOTATED_CDS"/>
    <property type="molecule type" value="Genomic_DNA"/>
</dbReference>
<dbReference type="EMBL" id="BC049897">
    <property type="protein sequence ID" value="AAH49897.1"/>
    <property type="molecule type" value="mRNA"/>
</dbReference>
<dbReference type="EMBL" id="BC054724">
    <property type="protein sequence ID" value="AAH54724.1"/>
    <property type="molecule type" value="mRNA"/>
</dbReference>
<dbReference type="CCDS" id="CCDS25036.1">
    <molecule id="Q9CQG2-1"/>
</dbReference>
<dbReference type="RefSeq" id="NP_080473.1">
    <molecule id="Q9CQG2-1"/>
    <property type="nucleotide sequence ID" value="NM_026197.3"/>
</dbReference>
<dbReference type="RefSeq" id="XP_006534061.1">
    <molecule id="Q9CQG2-1"/>
    <property type="nucleotide sequence ID" value="XM_006533998.5"/>
</dbReference>
<dbReference type="RefSeq" id="XP_006534062.1">
    <molecule id="Q9CQG2-1"/>
    <property type="nucleotide sequence ID" value="XM_006533999.4"/>
</dbReference>
<dbReference type="SMR" id="Q9CQG2"/>
<dbReference type="BioGRID" id="212228">
    <property type="interactions" value="3"/>
</dbReference>
<dbReference type="FunCoup" id="Q9CQG2">
    <property type="interactions" value="5028"/>
</dbReference>
<dbReference type="STRING" id="10090.ENSMUSP00000114682"/>
<dbReference type="iPTMnet" id="Q9CQG2"/>
<dbReference type="PhosphoSitePlus" id="Q9CQG2"/>
<dbReference type="jPOST" id="Q9CQG2"/>
<dbReference type="PaxDb" id="10090-ENSMUSP00000114682"/>
<dbReference type="PeptideAtlas" id="Q9CQG2"/>
<dbReference type="ProteomicsDB" id="295858">
    <molecule id="Q9CQG2-1"/>
</dbReference>
<dbReference type="ProteomicsDB" id="295859">
    <molecule id="Q9CQG2-2"/>
</dbReference>
<dbReference type="Pumba" id="Q9CQG2"/>
<dbReference type="Antibodypedia" id="5377">
    <property type="antibodies" value="272 antibodies from 26 providers"/>
</dbReference>
<dbReference type="DNASU" id="67493"/>
<dbReference type="Ensembl" id="ENSMUST00000141755.8">
    <molecule id="Q9CQG2-1"/>
    <property type="protein sequence ID" value="ENSMUSP00000114682.2"/>
    <property type="gene ID" value="ENSMUSG00000010554.15"/>
</dbReference>
<dbReference type="GeneID" id="67493"/>
<dbReference type="KEGG" id="mmu:67493"/>
<dbReference type="UCSC" id="uc007kch.1">
    <molecule id="Q9CQG2-1"/>
    <property type="organism name" value="mouse"/>
</dbReference>
<dbReference type="UCSC" id="uc011xza.1">
    <molecule id="Q9CQG2-2"/>
    <property type="organism name" value="mouse"/>
</dbReference>
<dbReference type="AGR" id="MGI:1914743"/>
<dbReference type="CTD" id="79066"/>
<dbReference type="MGI" id="MGI:1914743">
    <property type="gene designation" value="Mettl16"/>
</dbReference>
<dbReference type="VEuPathDB" id="HostDB:ENSMUSG00000010554"/>
<dbReference type="eggNOG" id="KOG2912">
    <property type="taxonomic scope" value="Eukaryota"/>
</dbReference>
<dbReference type="GeneTree" id="ENSGT00390000016694"/>
<dbReference type="HOGENOM" id="CLU_027534_0_0_1"/>
<dbReference type="InParanoid" id="Q9CQG2"/>
<dbReference type="OrthoDB" id="52995at9989"/>
<dbReference type="PhylomeDB" id="Q9CQG2"/>
<dbReference type="TreeFam" id="TF313132"/>
<dbReference type="BRENDA" id="2.1.1.346">
    <property type="organism ID" value="3474"/>
</dbReference>
<dbReference type="BioGRID-ORCS" id="67493">
    <property type="hits" value="27 hits in 79 CRISPR screens"/>
</dbReference>
<dbReference type="ChiTaRS" id="Mettl16">
    <property type="organism name" value="mouse"/>
</dbReference>
<dbReference type="PRO" id="PR:Q9CQG2"/>
<dbReference type="Proteomes" id="UP000000589">
    <property type="component" value="Chromosome 11"/>
</dbReference>
<dbReference type="RNAct" id="Q9CQG2">
    <property type="molecule type" value="protein"/>
</dbReference>
<dbReference type="Bgee" id="ENSMUSG00000010554">
    <property type="expression patterns" value="Expressed in manus and 238 other cell types or tissues"/>
</dbReference>
<dbReference type="ExpressionAtlas" id="Q9CQG2">
    <property type="expression patterns" value="baseline and differential"/>
</dbReference>
<dbReference type="GO" id="GO:0005737">
    <property type="term" value="C:cytoplasm"/>
    <property type="evidence" value="ECO:0000250"/>
    <property type="project" value="UniProtKB"/>
</dbReference>
<dbReference type="GO" id="GO:0005634">
    <property type="term" value="C:nucleus"/>
    <property type="evidence" value="ECO:0000250"/>
    <property type="project" value="UniProtKB"/>
</dbReference>
<dbReference type="GO" id="GO:0001734">
    <property type="term" value="F:mRNA m(6)A methyltransferase activity"/>
    <property type="evidence" value="ECO:0000314"/>
    <property type="project" value="UniProtKB"/>
</dbReference>
<dbReference type="GO" id="GO:0003723">
    <property type="term" value="F:RNA binding"/>
    <property type="evidence" value="ECO:0000250"/>
    <property type="project" value="UniProtKB"/>
</dbReference>
<dbReference type="GO" id="GO:0035613">
    <property type="term" value="F:RNA stem-loop binding"/>
    <property type="evidence" value="ECO:0000250"/>
    <property type="project" value="UniProtKB"/>
</dbReference>
<dbReference type="GO" id="GO:0120048">
    <property type="term" value="F:U6 snRNA (adenine-(43)-N(6))-methyltransferase activity"/>
    <property type="evidence" value="ECO:0000250"/>
    <property type="project" value="UniProtKB"/>
</dbReference>
<dbReference type="GO" id="GO:0030629">
    <property type="term" value="F:U6 snRNA 3'-end binding"/>
    <property type="evidence" value="ECO:0000250"/>
    <property type="project" value="UniProtKB"/>
</dbReference>
<dbReference type="GO" id="GO:0006402">
    <property type="term" value="P:mRNA catabolic process"/>
    <property type="evidence" value="ECO:0000314"/>
    <property type="project" value="UniProtKB"/>
</dbReference>
<dbReference type="GO" id="GO:0061157">
    <property type="term" value="P:mRNA destabilization"/>
    <property type="evidence" value="ECO:0000314"/>
    <property type="project" value="UniProtKB"/>
</dbReference>
<dbReference type="GO" id="GO:0006397">
    <property type="term" value="P:mRNA processing"/>
    <property type="evidence" value="ECO:0000315"/>
    <property type="project" value="UniProtKB"/>
</dbReference>
<dbReference type="GO" id="GO:1905869">
    <property type="term" value="P:negative regulation of 3'-UTR-mediated mRNA stabilization"/>
    <property type="evidence" value="ECO:0007669"/>
    <property type="project" value="Ensembl"/>
</dbReference>
<dbReference type="GO" id="GO:0010608">
    <property type="term" value="P:post-transcriptional regulation of gene expression"/>
    <property type="evidence" value="ECO:0000314"/>
    <property type="project" value="UniProtKB"/>
</dbReference>
<dbReference type="GO" id="GO:0048024">
    <property type="term" value="P:regulation of mRNA splicing, via spliceosome"/>
    <property type="evidence" value="ECO:0000250"/>
    <property type="project" value="UniProtKB"/>
</dbReference>
<dbReference type="GO" id="GO:0001510">
    <property type="term" value="P:RNA methylation"/>
    <property type="evidence" value="ECO:0000314"/>
    <property type="project" value="UniProtKB"/>
</dbReference>
<dbReference type="GO" id="GO:0006556">
    <property type="term" value="P:S-adenosylmethionine biosynthetic process"/>
    <property type="evidence" value="ECO:0007669"/>
    <property type="project" value="Ensembl"/>
</dbReference>
<dbReference type="GO" id="GO:0120049">
    <property type="term" value="P:snRNA (adenine-N6)-methylation"/>
    <property type="evidence" value="ECO:0000250"/>
    <property type="project" value="UniProtKB"/>
</dbReference>
<dbReference type="CDD" id="cd02440">
    <property type="entry name" value="AdoMet_MTases"/>
    <property type="match status" value="1"/>
</dbReference>
<dbReference type="FunFam" id="3.40.50.150:FF:000062">
    <property type="entry name" value="U6 small nuclear RNA (adenine-(43)-N(6))-methyltransferase"/>
    <property type="match status" value="1"/>
</dbReference>
<dbReference type="Gene3D" id="3.40.50.150">
    <property type="entry name" value="Vaccinia Virus protein VP39"/>
    <property type="match status" value="1"/>
</dbReference>
<dbReference type="InterPro" id="IPR017182">
    <property type="entry name" value="METTL16/PsiM"/>
</dbReference>
<dbReference type="InterPro" id="IPR010286">
    <property type="entry name" value="METTL16/RlmF"/>
</dbReference>
<dbReference type="InterPro" id="IPR029063">
    <property type="entry name" value="SAM-dependent_MTases_sf"/>
</dbReference>
<dbReference type="PANTHER" id="PTHR13393:SF0">
    <property type="entry name" value="RNA N6-ADENOSINE-METHYLTRANSFERASE METTL16"/>
    <property type="match status" value="1"/>
</dbReference>
<dbReference type="PANTHER" id="PTHR13393">
    <property type="entry name" value="SAM-DEPENDENT METHYLTRANSFERASE"/>
    <property type="match status" value="1"/>
</dbReference>
<dbReference type="Pfam" id="PF05971">
    <property type="entry name" value="Methyltransf_10"/>
    <property type="match status" value="1"/>
</dbReference>
<dbReference type="PIRSF" id="PIRSF037350">
    <property type="entry name" value="Mtase_ZK1128_prd"/>
    <property type="match status" value="1"/>
</dbReference>
<dbReference type="SUPFAM" id="SSF53335">
    <property type="entry name" value="S-adenosyl-L-methionine-dependent methyltransferases"/>
    <property type="match status" value="1"/>
</dbReference>
<name>MET16_MOUSE</name>
<sequence length="553" mass="62341">MALSKSMHARNRYKDKPPDFAYLASKYPDFKQHIQINLNGRVSLNFKDPEAVRALTCTLLREDFGLSIDIPLERLIPTVPLRLNYIHWVEDLIGHQDSDKTTLRRGIDIGTGASCIYPLLGATLNGWYFLATEVDDMCFNYAKKNVEQNNLSDLIKVVKVPQKTLLMDALKEESEIVYDFCMCNPPFFANQLEAKGVNSRNSRRPPPSSVNTGGITEIMAEGGELEFVKRIIHDSLQLKKRLRWYSCMLGKKCSLAPLKEELRIQGVPKVTFTEFCQGRTMRWALAWSFYDDVTVPSPPSKRRKLEKPRKPITFVVLESVMKELSLKASSLGSETAEGIVVVTTWIEKILTDLKVQHKRIPCGREEVSLFLTAIENSWIHLRRKRRERVRQLREVPRAPEDVILALEERKSTPKELSSGQDVAHSPQESALCGLDVPGGEAAADGGHCLSQKLLCQEETPEATEDERDEERGGMEAMESCKGSSNGAQDGEASEKGDRLDGAAGRYLFKCLVNIKKEAGDAVVEMHWVEGQNRDLMNQLCTYVRNQILRLVAS</sequence>
<keyword id="KW-0025">Alternative splicing</keyword>
<keyword id="KW-0963">Cytoplasm</keyword>
<keyword id="KW-0489">Methyltransferase</keyword>
<keyword id="KW-0539">Nucleus</keyword>
<keyword id="KW-0597">Phosphoprotein</keyword>
<keyword id="KW-1185">Reference proteome</keyword>
<keyword id="KW-0694">RNA-binding</keyword>
<keyword id="KW-0949">S-adenosyl-L-methionine</keyword>
<keyword id="KW-0808">Transferase</keyword>